<keyword id="KW-1003">Cell membrane</keyword>
<keyword id="KW-0472">Membrane</keyword>
<keyword id="KW-1185">Reference proteome</keyword>
<keyword id="KW-0812">Transmembrane</keyword>
<keyword id="KW-1133">Transmembrane helix</keyword>
<comment type="function">
    <text evidence="1">Required for the proteolytic cleavage of the transcription factor RIM101 in response to alkaline ambient pH.</text>
</comment>
<comment type="subcellular location">
    <subcellularLocation>
        <location evidence="1">Cell membrane</location>
        <topology evidence="1">Multi-pass membrane protein</topology>
    </subcellularLocation>
</comment>
<comment type="similarity">
    <text evidence="3">Belongs to the palI/RIM9 family.</text>
</comment>
<reference key="1">
    <citation type="journal article" date="2004" name="Nature">
        <title>Genome evolution in yeasts.</title>
        <authorList>
            <person name="Dujon B."/>
            <person name="Sherman D."/>
            <person name="Fischer G."/>
            <person name="Durrens P."/>
            <person name="Casaregola S."/>
            <person name="Lafontaine I."/>
            <person name="de Montigny J."/>
            <person name="Marck C."/>
            <person name="Neuveglise C."/>
            <person name="Talla E."/>
            <person name="Goffard N."/>
            <person name="Frangeul L."/>
            <person name="Aigle M."/>
            <person name="Anthouard V."/>
            <person name="Babour A."/>
            <person name="Barbe V."/>
            <person name="Barnay S."/>
            <person name="Blanchin S."/>
            <person name="Beckerich J.-M."/>
            <person name="Beyne E."/>
            <person name="Bleykasten C."/>
            <person name="Boisrame A."/>
            <person name="Boyer J."/>
            <person name="Cattolico L."/>
            <person name="Confanioleri F."/>
            <person name="de Daruvar A."/>
            <person name="Despons L."/>
            <person name="Fabre E."/>
            <person name="Fairhead C."/>
            <person name="Ferry-Dumazet H."/>
            <person name="Groppi A."/>
            <person name="Hantraye F."/>
            <person name="Hennequin C."/>
            <person name="Jauniaux N."/>
            <person name="Joyet P."/>
            <person name="Kachouri R."/>
            <person name="Kerrest A."/>
            <person name="Koszul R."/>
            <person name="Lemaire M."/>
            <person name="Lesur I."/>
            <person name="Ma L."/>
            <person name="Muller H."/>
            <person name="Nicaud J.-M."/>
            <person name="Nikolski M."/>
            <person name="Oztas S."/>
            <person name="Ozier-Kalogeropoulos O."/>
            <person name="Pellenz S."/>
            <person name="Potier S."/>
            <person name="Richard G.-F."/>
            <person name="Straub M.-L."/>
            <person name="Suleau A."/>
            <person name="Swennen D."/>
            <person name="Tekaia F."/>
            <person name="Wesolowski-Louvel M."/>
            <person name="Westhof E."/>
            <person name="Wirth B."/>
            <person name="Zeniou-Meyer M."/>
            <person name="Zivanovic Y."/>
            <person name="Bolotin-Fukuhara M."/>
            <person name="Thierry A."/>
            <person name="Bouchier C."/>
            <person name="Caudron B."/>
            <person name="Scarpelli C."/>
            <person name="Gaillardin C."/>
            <person name="Weissenbach J."/>
            <person name="Wincker P."/>
            <person name="Souciet J.-L."/>
        </authorList>
    </citation>
    <scope>NUCLEOTIDE SEQUENCE [LARGE SCALE GENOMIC DNA]</scope>
    <source>
        <strain>ATCC 8585 / CBS 2359 / DSM 70799 / NBRC 1267 / NRRL Y-1140 / WM37</strain>
    </source>
</reference>
<feature type="chain" id="PRO_0000058206" description="pH-response regulator palI/RIM9 homolog 1">
    <location>
        <begin position="1"/>
        <end position="220"/>
    </location>
</feature>
<feature type="topological domain" description="Cytoplasmic" evidence="2">
    <location>
        <begin position="1"/>
        <end position="5"/>
    </location>
</feature>
<feature type="transmembrane region" description="Helical" evidence="2">
    <location>
        <begin position="6"/>
        <end position="26"/>
    </location>
</feature>
<feature type="topological domain" description="Extracellular" evidence="2">
    <location>
        <begin position="27"/>
        <end position="89"/>
    </location>
</feature>
<feature type="transmembrane region" description="Helical" evidence="2">
    <location>
        <begin position="90"/>
        <end position="110"/>
    </location>
</feature>
<feature type="topological domain" description="Cytoplasmic" evidence="2">
    <location>
        <begin position="111"/>
        <end position="121"/>
    </location>
</feature>
<feature type="transmembrane region" description="Helical" evidence="2">
    <location>
        <begin position="122"/>
        <end position="142"/>
    </location>
</feature>
<feature type="topological domain" description="Extracellular" evidence="2">
    <location>
        <begin position="143"/>
        <end position="155"/>
    </location>
</feature>
<feature type="transmembrane region" description="Helical" evidence="2">
    <location>
        <begin position="156"/>
        <end position="176"/>
    </location>
</feature>
<feature type="topological domain" description="Cytoplasmic" evidence="2">
    <location>
        <begin position="177"/>
        <end position="220"/>
    </location>
</feature>
<evidence type="ECO:0000250" key="1"/>
<evidence type="ECO:0000255" key="2"/>
<evidence type="ECO:0000305" key="3"/>
<accession>Q6CXZ7</accession>
<proteinExistence type="inferred from homology"/>
<name>PALI1_KLULA</name>
<dbReference type="EMBL" id="CR382121">
    <property type="protein sequence ID" value="CAH02780.1"/>
    <property type="molecule type" value="Genomic_DNA"/>
</dbReference>
<dbReference type="RefSeq" id="XP_451192.1">
    <property type="nucleotide sequence ID" value="XM_451192.1"/>
</dbReference>
<dbReference type="FunCoup" id="Q6CXZ7">
    <property type="interactions" value="15"/>
</dbReference>
<dbReference type="STRING" id="284590.Q6CXZ7"/>
<dbReference type="PaxDb" id="284590-Q6CXZ7"/>
<dbReference type="KEGG" id="kla:KLLA0_A04389g"/>
<dbReference type="eggNOG" id="ENOG502S1J0">
    <property type="taxonomic scope" value="Eukaryota"/>
</dbReference>
<dbReference type="HOGENOM" id="CLU_084537_0_0_1"/>
<dbReference type="InParanoid" id="Q6CXZ7"/>
<dbReference type="OMA" id="DWPGWLM"/>
<dbReference type="Proteomes" id="UP000000598">
    <property type="component" value="Chromosome A"/>
</dbReference>
<dbReference type="GO" id="GO:0032153">
    <property type="term" value="C:cell division site"/>
    <property type="evidence" value="ECO:0007669"/>
    <property type="project" value="TreeGrafter"/>
</dbReference>
<dbReference type="GO" id="GO:0035838">
    <property type="term" value="C:growing cell tip"/>
    <property type="evidence" value="ECO:0007669"/>
    <property type="project" value="TreeGrafter"/>
</dbReference>
<dbReference type="GO" id="GO:0005886">
    <property type="term" value="C:plasma membrane"/>
    <property type="evidence" value="ECO:0007669"/>
    <property type="project" value="UniProtKB-SubCell"/>
</dbReference>
<dbReference type="InterPro" id="IPR051380">
    <property type="entry name" value="pH-response_reg_palI/RIM9"/>
</dbReference>
<dbReference type="InterPro" id="IPR009571">
    <property type="entry name" value="SUR7/Rim9-like_fungi"/>
</dbReference>
<dbReference type="PANTHER" id="PTHR28013">
    <property type="entry name" value="PROTEIN DCV1-RELATED"/>
    <property type="match status" value="1"/>
</dbReference>
<dbReference type="PANTHER" id="PTHR28013:SF3">
    <property type="entry name" value="PROTEIN DCV1-RELATED"/>
    <property type="match status" value="1"/>
</dbReference>
<dbReference type="Pfam" id="PF06687">
    <property type="entry name" value="SUR7"/>
    <property type="match status" value="1"/>
</dbReference>
<protein>
    <recommendedName>
        <fullName>pH-response regulator palI/RIM9 homolog 1</fullName>
    </recommendedName>
</protein>
<gene>
    <name type="ordered locus">KLLA0A04389g</name>
</gene>
<organism>
    <name type="scientific">Kluyveromyces lactis (strain ATCC 8585 / CBS 2359 / DSM 70799 / NBRC 1267 / NRRL Y-1140 / WM37)</name>
    <name type="common">Yeast</name>
    <name type="synonym">Candida sphaerica</name>
    <dbReference type="NCBI Taxonomy" id="284590"/>
    <lineage>
        <taxon>Eukaryota</taxon>
        <taxon>Fungi</taxon>
        <taxon>Dikarya</taxon>
        <taxon>Ascomycota</taxon>
        <taxon>Saccharomycotina</taxon>
        <taxon>Saccharomycetes</taxon>
        <taxon>Saccharomycetales</taxon>
        <taxon>Saccharomycetaceae</taxon>
        <taxon>Kluyveromyces</taxon>
    </lineage>
</organism>
<sequence>MSHFKIVFLTSLSLALVFELFNTISVPITSHLFISEYNGYKFGVFGWCKVDGSICSPIRMGYSLDDILLFNDNEYLHLPNHAKYALSKLLLVHVLSFVCVLVFWLFAILICIKWLNTSKSVLLFAVGWSMVTFMVSLLGFLIDVLMFASHVTWSSWLMLVSAFFVALSGILLCLMIRDLSYRRFVKLQGEVDVCVPMTEPRDPDELNEIWKKKTSKREIL</sequence>